<sequence>LRLDLSNLR</sequence>
<keyword id="KW-0903">Direct protein sequencing</keyword>
<name>UP09_FRUSA</name>
<organism>
    <name type="scientific">Fructilactobacillus sanfranciscensis</name>
    <name type="common">Lactobacillus sanfranciscensis</name>
    <dbReference type="NCBI Taxonomy" id="1625"/>
    <lineage>
        <taxon>Bacteria</taxon>
        <taxon>Bacillati</taxon>
        <taxon>Bacillota</taxon>
        <taxon>Bacilli</taxon>
        <taxon>Lactobacillales</taxon>
        <taxon>Lactobacillaceae</taxon>
        <taxon>Fructilactobacillus</taxon>
    </lineage>
</organism>
<feature type="chain" id="PRO_0000285980" description="Unknown protein 9 from 2D-PAGE">
    <location>
        <begin position="1" status="less than"/>
        <end position="9" status="greater than"/>
    </location>
</feature>
<feature type="non-terminal residue" evidence="2">
    <location>
        <position position="1"/>
    </location>
</feature>
<feature type="non-terminal residue" evidence="2">
    <location>
        <position position="9"/>
    </location>
</feature>
<proteinExistence type="evidence at protein level"/>
<accession>P83539</accession>
<reference evidence="3" key="1">
    <citation type="journal article" date="2002" name="Proteomics">
        <title>High pressure effects step-wise altered protein expression in Lactobacillus sanfranciscensis.</title>
        <authorList>
            <person name="Drews O."/>
            <person name="Weiss W."/>
            <person name="Reil G."/>
            <person name="Parlar H."/>
            <person name="Wait R."/>
            <person name="Goerg A."/>
        </authorList>
    </citation>
    <scope>PROTEIN SEQUENCE</scope>
    <scope>INDUCTION</scope>
    <source>
        <strain evidence="1">ATCC 27651 / DSM 20451 / JCM 5668 / KCTC 3205 / NCIMB 702811 / NRRL B-3934 / L-12</strain>
    </source>
</reference>
<comment type="induction">
    <text evidence="1">By elevated hydrostatic pressure.</text>
</comment>
<comment type="miscellaneous">
    <text evidence="1">On the 2D-gel the determined MW of this unknown protein is: 65 kDa.</text>
</comment>
<protein>
    <recommendedName>
        <fullName>Unknown protein 9 from 2D-PAGE</fullName>
    </recommendedName>
</protein>
<evidence type="ECO:0000269" key="1">
    <source>
    </source>
</evidence>
<evidence type="ECO:0000303" key="2">
    <source>
    </source>
</evidence>
<evidence type="ECO:0000305" key="3"/>